<organism>
    <name type="scientific">Oryctolagus cuniculus</name>
    <name type="common">Rabbit</name>
    <dbReference type="NCBI Taxonomy" id="9986"/>
    <lineage>
        <taxon>Eukaryota</taxon>
        <taxon>Metazoa</taxon>
        <taxon>Chordata</taxon>
        <taxon>Craniata</taxon>
        <taxon>Vertebrata</taxon>
        <taxon>Euteleostomi</taxon>
        <taxon>Mammalia</taxon>
        <taxon>Eutheria</taxon>
        <taxon>Euarchontoglires</taxon>
        <taxon>Glires</taxon>
        <taxon>Lagomorpha</taxon>
        <taxon>Leporidae</taxon>
        <taxon>Oryctolagus</taxon>
    </lineage>
</organism>
<evidence type="ECO:0000250" key="1"/>
<evidence type="ECO:0000250" key="2">
    <source>
        <dbReference type="UniProtKB" id="P05455"/>
    </source>
</evidence>
<evidence type="ECO:0000256" key="3">
    <source>
        <dbReference type="SAM" id="MobiDB-lite"/>
    </source>
</evidence>
<evidence type="ECO:0000305" key="4"/>
<gene>
    <name type="primary">SSB</name>
</gene>
<feature type="chain" id="PRO_0000207601" description="Lupus La protein homolog">
    <location>
        <begin position="1" status="less than"/>
        <end position="53"/>
    </location>
</feature>
<feature type="region of interest" description="Disordered" evidence="3">
    <location>
        <begin position="1"/>
        <end position="53"/>
    </location>
</feature>
<feature type="compositionally biased region" description="Basic and acidic residues" evidence="3">
    <location>
        <begin position="1"/>
        <end position="13"/>
    </location>
</feature>
<feature type="compositionally biased region" description="Basic and acidic residues" evidence="3">
    <location>
        <begin position="29"/>
        <end position="40"/>
    </location>
</feature>
<feature type="modified residue" description="N6-acetyllysine" evidence="2">
    <location>
        <position position="8"/>
    </location>
</feature>
<feature type="modified residue" description="Phosphothreonine" evidence="2">
    <location>
        <position position="10"/>
    </location>
</feature>
<feature type="modified residue" description="Phosphoserine" evidence="2">
    <location>
        <position position="14"/>
    </location>
</feature>
<feature type="non-terminal residue">
    <location>
        <position position="1"/>
    </location>
</feature>
<accession>Q04504</accession>
<reference key="1">
    <citation type="journal article" date="1989" name="J. Autoimmun.">
        <title>Sjogren's syndrome nuclear antigen B (La): cDNA cloning, structural domains, and autoepitopes.</title>
        <authorList>
            <person name="Chan E.K."/>
            <person name="Sullivan K.F."/>
        </authorList>
    </citation>
    <scope>NUCLEOTIDE SEQUENCE [MRNA]</scope>
    <source>
        <tissue>Liver</tissue>
    </source>
</reference>
<comment type="function">
    <text>Binds to the 3' poly(U) terminus of nascent RNA polymerase III transcripts, protecting them from exonuclease digestion and facilitating their folding and maturation.</text>
</comment>
<comment type="subunit">
    <text evidence="1">Interacts with DDX15. May interact with RUFY1 (By similarity).</text>
</comment>
<comment type="subcellular location">
    <subcellularLocation>
        <location evidence="4">Nucleus</location>
    </subcellularLocation>
</comment>
<comment type="PTM">
    <text evidence="1">Phosphorylated.</text>
</comment>
<proteinExistence type="evidence at transcript level"/>
<keyword id="KW-0007">Acetylation</keyword>
<keyword id="KW-0539">Nucleus</keyword>
<keyword id="KW-0597">Phosphoprotein</keyword>
<keyword id="KW-1185">Reference proteome</keyword>
<keyword id="KW-0694">RNA-binding</keyword>
<protein>
    <recommendedName>
        <fullName>Lupus La protein homolog</fullName>
    </recommendedName>
    <alternativeName>
        <fullName>La autoantigen homolog</fullName>
    </alternativeName>
    <alternativeName>
        <fullName>La ribonucleoprotein</fullName>
    </alternativeName>
</protein>
<dbReference type="EMBL" id="L08230">
    <property type="protein sequence ID" value="AAA31419.1"/>
    <property type="molecule type" value="mRNA"/>
</dbReference>
<dbReference type="STRING" id="9986.ENSOCUP00000008958"/>
<dbReference type="PaxDb" id="9986-ENSOCUP00000008958"/>
<dbReference type="eggNOG" id="KOG4213">
    <property type="taxonomic scope" value="Eukaryota"/>
</dbReference>
<dbReference type="InParanoid" id="Q04504"/>
<dbReference type="Proteomes" id="UP000001811">
    <property type="component" value="Unplaced"/>
</dbReference>
<dbReference type="GO" id="GO:0005634">
    <property type="term" value="C:nucleus"/>
    <property type="evidence" value="ECO:0007669"/>
    <property type="project" value="UniProtKB-SubCell"/>
</dbReference>
<dbReference type="GO" id="GO:0003723">
    <property type="term" value="F:RNA binding"/>
    <property type="evidence" value="ECO:0007669"/>
    <property type="project" value="UniProtKB-KW"/>
</dbReference>
<name>LA_RABIT</name>
<sequence>GKVEFQGKKTKFDSDDERNENGAAGPVKRAREETDKEEPASKQQKTENGAGDQ</sequence>